<name>LEU3_BRUSU</name>
<accession>Q8FVF3</accession>
<accession>G0KDQ1</accession>
<proteinExistence type="inferred from homology"/>
<reference key="1">
    <citation type="journal article" date="2002" name="Proc. Natl. Acad. Sci. U.S.A.">
        <title>The Brucella suis genome reveals fundamental similarities between animal and plant pathogens and symbionts.</title>
        <authorList>
            <person name="Paulsen I.T."/>
            <person name="Seshadri R."/>
            <person name="Nelson K.E."/>
            <person name="Eisen J.A."/>
            <person name="Heidelberg J.F."/>
            <person name="Read T.D."/>
            <person name="Dodson R.J."/>
            <person name="Umayam L.A."/>
            <person name="Brinkac L.M."/>
            <person name="Beanan M.J."/>
            <person name="Daugherty S.C."/>
            <person name="DeBoy R.T."/>
            <person name="Durkin A.S."/>
            <person name="Kolonay J.F."/>
            <person name="Madupu R."/>
            <person name="Nelson W.C."/>
            <person name="Ayodeji B."/>
            <person name="Kraul M."/>
            <person name="Shetty J."/>
            <person name="Malek J.A."/>
            <person name="Van Aken S.E."/>
            <person name="Riedmuller S."/>
            <person name="Tettelin H."/>
            <person name="Gill S.R."/>
            <person name="White O."/>
            <person name="Salzberg S.L."/>
            <person name="Hoover D.L."/>
            <person name="Lindler L.E."/>
            <person name="Halling S.M."/>
            <person name="Boyle S.M."/>
            <person name="Fraser C.M."/>
        </authorList>
    </citation>
    <scope>NUCLEOTIDE SEQUENCE [LARGE SCALE GENOMIC DNA]</scope>
    <source>
        <strain>1330</strain>
    </source>
</reference>
<reference key="2">
    <citation type="journal article" date="2011" name="J. Bacteriol.">
        <title>Revised genome sequence of Brucella suis 1330.</title>
        <authorList>
            <person name="Tae H."/>
            <person name="Shallom S."/>
            <person name="Settlage R."/>
            <person name="Preston D."/>
            <person name="Adams L.G."/>
            <person name="Garner H.R."/>
        </authorList>
    </citation>
    <scope>NUCLEOTIDE SEQUENCE [LARGE SCALE GENOMIC DNA]</scope>
    <source>
        <strain>1330</strain>
    </source>
</reference>
<organism>
    <name type="scientific">Brucella suis biovar 1 (strain 1330)</name>
    <dbReference type="NCBI Taxonomy" id="204722"/>
    <lineage>
        <taxon>Bacteria</taxon>
        <taxon>Pseudomonadati</taxon>
        <taxon>Pseudomonadota</taxon>
        <taxon>Alphaproteobacteria</taxon>
        <taxon>Hyphomicrobiales</taxon>
        <taxon>Brucellaceae</taxon>
        <taxon>Brucella/Ochrobactrum group</taxon>
        <taxon>Brucella</taxon>
    </lineage>
</organism>
<gene>
    <name evidence="1" type="primary">leuB</name>
    <name type="ordered locus">BRA0890</name>
    <name type="ordered locus">BS1330_II0883</name>
</gene>
<evidence type="ECO:0000255" key="1">
    <source>
        <dbReference type="HAMAP-Rule" id="MF_01033"/>
    </source>
</evidence>
<feature type="chain" id="PRO_0000083654" description="3-isopropylmalate dehydrogenase">
    <location>
        <begin position="1"/>
        <end position="370"/>
    </location>
</feature>
<feature type="binding site" evidence="1">
    <location>
        <begin position="77"/>
        <end position="90"/>
    </location>
    <ligand>
        <name>NAD(+)</name>
        <dbReference type="ChEBI" id="CHEBI:57540"/>
    </ligand>
</feature>
<feature type="binding site" evidence="1">
    <location>
        <position position="97"/>
    </location>
    <ligand>
        <name>substrate</name>
    </ligand>
</feature>
<feature type="binding site" evidence="1">
    <location>
        <position position="107"/>
    </location>
    <ligand>
        <name>substrate</name>
    </ligand>
</feature>
<feature type="binding site" evidence="1">
    <location>
        <position position="135"/>
    </location>
    <ligand>
        <name>substrate</name>
    </ligand>
</feature>
<feature type="binding site" evidence="1">
    <location>
        <position position="226"/>
    </location>
    <ligand>
        <name>Mg(2+)</name>
        <dbReference type="ChEBI" id="CHEBI:18420"/>
    </ligand>
</feature>
<feature type="binding site" evidence="1">
    <location>
        <position position="226"/>
    </location>
    <ligand>
        <name>substrate</name>
    </ligand>
</feature>
<feature type="binding site" evidence="1">
    <location>
        <position position="250"/>
    </location>
    <ligand>
        <name>Mg(2+)</name>
        <dbReference type="ChEBI" id="CHEBI:18420"/>
    </ligand>
</feature>
<feature type="binding site" evidence="1">
    <location>
        <position position="254"/>
    </location>
    <ligand>
        <name>Mg(2+)</name>
        <dbReference type="ChEBI" id="CHEBI:18420"/>
    </ligand>
</feature>
<feature type="binding site" evidence="1">
    <location>
        <begin position="290"/>
        <end position="302"/>
    </location>
    <ligand>
        <name>NAD(+)</name>
        <dbReference type="ChEBI" id="CHEBI:57540"/>
    </ligand>
</feature>
<feature type="site" description="Important for catalysis" evidence="1">
    <location>
        <position position="142"/>
    </location>
</feature>
<feature type="site" description="Important for catalysis" evidence="1">
    <location>
        <position position="193"/>
    </location>
</feature>
<protein>
    <recommendedName>
        <fullName evidence="1">3-isopropylmalate dehydrogenase</fullName>
        <ecNumber evidence="1">1.1.1.85</ecNumber>
    </recommendedName>
    <alternativeName>
        <fullName evidence="1">3-IPM-DH</fullName>
    </alternativeName>
    <alternativeName>
        <fullName evidence="1">Beta-IPM dehydrogenase</fullName>
        <shortName evidence="1">IMDH</shortName>
    </alternativeName>
</protein>
<comment type="function">
    <text evidence="1">Catalyzes the oxidation of 3-carboxy-2-hydroxy-4-methylpentanoate (3-isopropylmalate) to 3-carboxy-4-methyl-2-oxopentanoate. The product decarboxylates to 4-methyl-2 oxopentanoate.</text>
</comment>
<comment type="catalytic activity">
    <reaction evidence="1">
        <text>(2R,3S)-3-isopropylmalate + NAD(+) = 4-methyl-2-oxopentanoate + CO2 + NADH</text>
        <dbReference type="Rhea" id="RHEA:32271"/>
        <dbReference type="ChEBI" id="CHEBI:16526"/>
        <dbReference type="ChEBI" id="CHEBI:17865"/>
        <dbReference type="ChEBI" id="CHEBI:35121"/>
        <dbReference type="ChEBI" id="CHEBI:57540"/>
        <dbReference type="ChEBI" id="CHEBI:57945"/>
        <dbReference type="EC" id="1.1.1.85"/>
    </reaction>
</comment>
<comment type="cofactor">
    <cofactor evidence="1">
        <name>Mg(2+)</name>
        <dbReference type="ChEBI" id="CHEBI:18420"/>
    </cofactor>
    <cofactor evidence="1">
        <name>Mn(2+)</name>
        <dbReference type="ChEBI" id="CHEBI:29035"/>
    </cofactor>
    <text evidence="1">Binds 1 Mg(2+) or Mn(2+) ion per subunit.</text>
</comment>
<comment type="pathway">
    <text evidence="1">Amino-acid biosynthesis; L-leucine biosynthesis; L-leucine from 3-methyl-2-oxobutanoate: step 3/4.</text>
</comment>
<comment type="subunit">
    <text evidence="1">Homodimer.</text>
</comment>
<comment type="subcellular location">
    <subcellularLocation>
        <location evidence="1">Cytoplasm</location>
    </subcellularLocation>
</comment>
<comment type="similarity">
    <text evidence="1">Belongs to the isocitrate and isopropylmalate dehydrogenases family. LeuB type 1 subfamily.</text>
</comment>
<sequence>MASRKLLLLPGDGIGPEAMAEVRKVIAFLNSDLNLGFETEEGLVGGCAYDAHGQAISDADMEKALAADAVLFGAVGGPKWDSVPYEVRPEAGLLRLRKDMQLYANLRPAICYPALAHSSSLKPEVIEGLDILILRELTGGVYFGEPKEIIDLGNGQKRGIDTQVYDTYEIERIADVAFELARTRRNKVTSMEKRNVMKSGVLWNQVVTARHKEKHADVQLEHMLADAGGMQLVRWPKQFDVILTDNLFGDLLSDVAAMLTGSLGMLPSASLGAADSKTGKRKALYEPVHGSAPDIAGKGIANPIAMIASLAMCLRYSFGLVAEADRLEAAIAGVLDDGIRTADIWSEGNTKVGTTEMGDAILAKFKALSA</sequence>
<dbReference type="EC" id="1.1.1.85" evidence="1"/>
<dbReference type="EMBL" id="AE014292">
    <property type="protein sequence ID" value="AAN34062.1"/>
    <property type="molecule type" value="Genomic_DNA"/>
</dbReference>
<dbReference type="EMBL" id="CP002998">
    <property type="protein sequence ID" value="AEM20339.1"/>
    <property type="molecule type" value="Genomic_DNA"/>
</dbReference>
<dbReference type="RefSeq" id="WP_004687111.1">
    <property type="nucleotide sequence ID" value="NZ_KN046805.1"/>
</dbReference>
<dbReference type="SMR" id="Q8FVF3"/>
<dbReference type="GeneID" id="97535038"/>
<dbReference type="KEGG" id="bms:BRA0890"/>
<dbReference type="KEGG" id="bsi:BS1330_II0883"/>
<dbReference type="PATRIC" id="fig|204722.21.peg.414"/>
<dbReference type="HOGENOM" id="CLU_031953_0_3_5"/>
<dbReference type="PhylomeDB" id="Q8FVF3"/>
<dbReference type="UniPathway" id="UPA00048">
    <property type="reaction ID" value="UER00072"/>
</dbReference>
<dbReference type="Proteomes" id="UP000007104">
    <property type="component" value="Chromosome II"/>
</dbReference>
<dbReference type="GO" id="GO:0005829">
    <property type="term" value="C:cytosol"/>
    <property type="evidence" value="ECO:0007669"/>
    <property type="project" value="TreeGrafter"/>
</dbReference>
<dbReference type="GO" id="GO:0003862">
    <property type="term" value="F:3-isopropylmalate dehydrogenase activity"/>
    <property type="evidence" value="ECO:0007669"/>
    <property type="project" value="UniProtKB-UniRule"/>
</dbReference>
<dbReference type="GO" id="GO:0000287">
    <property type="term" value="F:magnesium ion binding"/>
    <property type="evidence" value="ECO:0007669"/>
    <property type="project" value="InterPro"/>
</dbReference>
<dbReference type="GO" id="GO:0051287">
    <property type="term" value="F:NAD binding"/>
    <property type="evidence" value="ECO:0007669"/>
    <property type="project" value="InterPro"/>
</dbReference>
<dbReference type="GO" id="GO:0009098">
    <property type="term" value="P:L-leucine biosynthetic process"/>
    <property type="evidence" value="ECO:0007669"/>
    <property type="project" value="UniProtKB-UniRule"/>
</dbReference>
<dbReference type="FunFam" id="3.40.718.10:FF:000006">
    <property type="entry name" value="3-isopropylmalate dehydrogenase"/>
    <property type="match status" value="1"/>
</dbReference>
<dbReference type="Gene3D" id="3.40.718.10">
    <property type="entry name" value="Isopropylmalate Dehydrogenase"/>
    <property type="match status" value="1"/>
</dbReference>
<dbReference type="HAMAP" id="MF_01033">
    <property type="entry name" value="LeuB_type1"/>
    <property type="match status" value="1"/>
</dbReference>
<dbReference type="InterPro" id="IPR019818">
    <property type="entry name" value="IsoCit/isopropylmalate_DH_CS"/>
</dbReference>
<dbReference type="InterPro" id="IPR024084">
    <property type="entry name" value="IsoPropMal-DH-like_dom"/>
</dbReference>
<dbReference type="InterPro" id="IPR004429">
    <property type="entry name" value="Isopropylmalate_DH"/>
</dbReference>
<dbReference type="NCBIfam" id="TIGR00169">
    <property type="entry name" value="leuB"/>
    <property type="match status" value="1"/>
</dbReference>
<dbReference type="PANTHER" id="PTHR42979">
    <property type="entry name" value="3-ISOPROPYLMALATE DEHYDROGENASE"/>
    <property type="match status" value="1"/>
</dbReference>
<dbReference type="PANTHER" id="PTHR42979:SF1">
    <property type="entry name" value="3-ISOPROPYLMALATE DEHYDROGENASE"/>
    <property type="match status" value="1"/>
</dbReference>
<dbReference type="Pfam" id="PF00180">
    <property type="entry name" value="Iso_dh"/>
    <property type="match status" value="1"/>
</dbReference>
<dbReference type="SMART" id="SM01329">
    <property type="entry name" value="Iso_dh"/>
    <property type="match status" value="1"/>
</dbReference>
<dbReference type="SUPFAM" id="SSF53659">
    <property type="entry name" value="Isocitrate/Isopropylmalate dehydrogenase-like"/>
    <property type="match status" value="1"/>
</dbReference>
<dbReference type="PROSITE" id="PS00470">
    <property type="entry name" value="IDH_IMDH"/>
    <property type="match status" value="1"/>
</dbReference>
<keyword id="KW-0028">Amino-acid biosynthesis</keyword>
<keyword id="KW-0100">Branched-chain amino acid biosynthesis</keyword>
<keyword id="KW-0963">Cytoplasm</keyword>
<keyword id="KW-0432">Leucine biosynthesis</keyword>
<keyword id="KW-0460">Magnesium</keyword>
<keyword id="KW-0464">Manganese</keyword>
<keyword id="KW-0479">Metal-binding</keyword>
<keyword id="KW-0520">NAD</keyword>
<keyword id="KW-0560">Oxidoreductase</keyword>